<keyword id="KW-0521">NADP</keyword>
<keyword id="KW-0560">Oxidoreductase</keyword>
<keyword id="KW-0627">Porphyrin biosynthesis</keyword>
<keyword id="KW-1185">Reference proteome</keyword>
<reference key="1">
    <citation type="journal article" date="2008" name="PLoS ONE">
        <title>Genetic basis of virulence attenuation revealed by comparative genomic analysis of Mycobacterium tuberculosis strain H37Ra versus H37Rv.</title>
        <authorList>
            <person name="Zheng H."/>
            <person name="Lu L."/>
            <person name="Wang B."/>
            <person name="Pu S."/>
            <person name="Zhang X."/>
            <person name="Zhu G."/>
            <person name="Shi W."/>
            <person name="Zhang L."/>
            <person name="Wang H."/>
            <person name="Wang S."/>
            <person name="Zhao G."/>
            <person name="Zhang Y."/>
        </authorList>
    </citation>
    <scope>NUCLEOTIDE SEQUENCE [LARGE SCALE GENOMIC DNA]</scope>
    <source>
        <strain>ATCC 25177 / H37Ra</strain>
    </source>
</reference>
<protein>
    <recommendedName>
        <fullName evidence="1">Glutamyl-tRNA reductase</fullName>
        <shortName evidence="1">GluTR</shortName>
        <ecNumber evidence="1">1.2.1.70</ecNumber>
    </recommendedName>
</protein>
<comment type="function">
    <text evidence="1">Catalyzes the NADPH-dependent reduction of glutamyl-tRNA(Glu) to glutamate 1-semialdehyde (GSA).</text>
</comment>
<comment type="catalytic activity">
    <reaction evidence="1">
        <text>(S)-4-amino-5-oxopentanoate + tRNA(Glu) + NADP(+) = L-glutamyl-tRNA(Glu) + NADPH + H(+)</text>
        <dbReference type="Rhea" id="RHEA:12344"/>
        <dbReference type="Rhea" id="RHEA-COMP:9663"/>
        <dbReference type="Rhea" id="RHEA-COMP:9680"/>
        <dbReference type="ChEBI" id="CHEBI:15378"/>
        <dbReference type="ChEBI" id="CHEBI:57501"/>
        <dbReference type="ChEBI" id="CHEBI:57783"/>
        <dbReference type="ChEBI" id="CHEBI:58349"/>
        <dbReference type="ChEBI" id="CHEBI:78442"/>
        <dbReference type="ChEBI" id="CHEBI:78520"/>
        <dbReference type="EC" id="1.2.1.70"/>
    </reaction>
</comment>
<comment type="pathway">
    <text evidence="1">Porphyrin-containing compound metabolism; protoporphyrin-IX biosynthesis; 5-aminolevulinate from L-glutamyl-tRNA(Glu): step 1/2.</text>
</comment>
<comment type="subunit">
    <text evidence="1">Homodimer.</text>
</comment>
<comment type="domain">
    <text evidence="1">Possesses an unusual extended V-shaped dimeric structure with each monomer consisting of three distinct domains arranged along a curved 'spinal' alpha-helix. The N-terminal catalytic domain specifically recognizes the glutamate moiety of the substrate. The second domain is the NADPH-binding domain, and the third C-terminal domain is responsible for dimerization.</text>
</comment>
<comment type="miscellaneous">
    <text evidence="1">During catalysis, the active site Cys acts as a nucleophile attacking the alpha-carbonyl group of tRNA-bound glutamate with the formation of a thioester intermediate between enzyme and glutamate, and the concomitant release of tRNA(Glu). The thioester intermediate is finally reduced by direct hydride transfer from NADPH, to form the product GSA.</text>
</comment>
<comment type="similarity">
    <text evidence="1">Belongs to the glutamyl-tRNA reductase family.</text>
</comment>
<dbReference type="EC" id="1.2.1.70" evidence="1"/>
<dbReference type="EMBL" id="CP000611">
    <property type="protein sequence ID" value="ABQ72239.1"/>
    <property type="molecule type" value="Genomic_DNA"/>
</dbReference>
<dbReference type="RefSeq" id="WP_003402699.1">
    <property type="nucleotide sequence ID" value="NZ_CP016972.1"/>
</dbReference>
<dbReference type="SMR" id="A5TZN9"/>
<dbReference type="KEGG" id="mra:MRA_0516"/>
<dbReference type="eggNOG" id="COG0373">
    <property type="taxonomic scope" value="Bacteria"/>
</dbReference>
<dbReference type="HOGENOM" id="CLU_035113_4_0_11"/>
<dbReference type="UniPathway" id="UPA00251">
    <property type="reaction ID" value="UER00316"/>
</dbReference>
<dbReference type="Proteomes" id="UP000001988">
    <property type="component" value="Chromosome"/>
</dbReference>
<dbReference type="GO" id="GO:0008883">
    <property type="term" value="F:glutamyl-tRNA reductase activity"/>
    <property type="evidence" value="ECO:0007669"/>
    <property type="project" value="UniProtKB-UniRule"/>
</dbReference>
<dbReference type="GO" id="GO:0050661">
    <property type="term" value="F:NADP binding"/>
    <property type="evidence" value="ECO:0007669"/>
    <property type="project" value="InterPro"/>
</dbReference>
<dbReference type="GO" id="GO:0019353">
    <property type="term" value="P:protoporphyrinogen IX biosynthetic process from glutamate"/>
    <property type="evidence" value="ECO:0007669"/>
    <property type="project" value="TreeGrafter"/>
</dbReference>
<dbReference type="CDD" id="cd05213">
    <property type="entry name" value="NAD_bind_Glutamyl_tRNA_reduct"/>
    <property type="match status" value="1"/>
</dbReference>
<dbReference type="FunFam" id="3.30.460.30:FF:000001">
    <property type="entry name" value="Glutamyl-tRNA reductase"/>
    <property type="match status" value="1"/>
</dbReference>
<dbReference type="Gene3D" id="3.30.460.30">
    <property type="entry name" value="Glutamyl-tRNA reductase, N-terminal domain"/>
    <property type="match status" value="1"/>
</dbReference>
<dbReference type="Gene3D" id="3.40.50.720">
    <property type="entry name" value="NAD(P)-binding Rossmann-like Domain"/>
    <property type="match status" value="1"/>
</dbReference>
<dbReference type="HAMAP" id="MF_00087">
    <property type="entry name" value="Glu_tRNA_reductase"/>
    <property type="match status" value="1"/>
</dbReference>
<dbReference type="InterPro" id="IPR000343">
    <property type="entry name" value="4pyrrol_synth_GluRdtase"/>
</dbReference>
<dbReference type="InterPro" id="IPR015896">
    <property type="entry name" value="4pyrrol_synth_GluRdtase_dimer"/>
</dbReference>
<dbReference type="InterPro" id="IPR015895">
    <property type="entry name" value="4pyrrol_synth_GluRdtase_N"/>
</dbReference>
<dbReference type="InterPro" id="IPR018214">
    <property type="entry name" value="GluRdtase_CS"/>
</dbReference>
<dbReference type="InterPro" id="IPR036453">
    <property type="entry name" value="GluRdtase_dimer_dom_sf"/>
</dbReference>
<dbReference type="InterPro" id="IPR036343">
    <property type="entry name" value="GluRdtase_N_sf"/>
</dbReference>
<dbReference type="InterPro" id="IPR036291">
    <property type="entry name" value="NAD(P)-bd_dom_sf"/>
</dbReference>
<dbReference type="InterPro" id="IPR006151">
    <property type="entry name" value="Shikm_DH/Glu-tRNA_Rdtase"/>
</dbReference>
<dbReference type="NCBIfam" id="TIGR01035">
    <property type="entry name" value="hemA"/>
    <property type="match status" value="1"/>
</dbReference>
<dbReference type="NCBIfam" id="NF000744">
    <property type="entry name" value="PRK00045.1-3"/>
    <property type="match status" value="1"/>
</dbReference>
<dbReference type="PANTHER" id="PTHR43013">
    <property type="entry name" value="GLUTAMYL-TRNA REDUCTASE"/>
    <property type="match status" value="1"/>
</dbReference>
<dbReference type="PANTHER" id="PTHR43013:SF1">
    <property type="entry name" value="GLUTAMYL-TRNA REDUCTASE"/>
    <property type="match status" value="1"/>
</dbReference>
<dbReference type="Pfam" id="PF00745">
    <property type="entry name" value="GlutR_dimer"/>
    <property type="match status" value="1"/>
</dbReference>
<dbReference type="Pfam" id="PF05201">
    <property type="entry name" value="GlutR_N"/>
    <property type="match status" value="1"/>
</dbReference>
<dbReference type="Pfam" id="PF01488">
    <property type="entry name" value="Shikimate_DH"/>
    <property type="match status" value="1"/>
</dbReference>
<dbReference type="PIRSF" id="PIRSF000445">
    <property type="entry name" value="4pyrrol_synth_GluRdtase"/>
    <property type="match status" value="1"/>
</dbReference>
<dbReference type="SUPFAM" id="SSF69742">
    <property type="entry name" value="Glutamyl tRNA-reductase catalytic, N-terminal domain"/>
    <property type="match status" value="1"/>
</dbReference>
<dbReference type="SUPFAM" id="SSF69075">
    <property type="entry name" value="Glutamyl tRNA-reductase dimerization domain"/>
    <property type="match status" value="1"/>
</dbReference>
<dbReference type="SUPFAM" id="SSF51735">
    <property type="entry name" value="NAD(P)-binding Rossmann-fold domains"/>
    <property type="match status" value="1"/>
</dbReference>
<dbReference type="PROSITE" id="PS00747">
    <property type="entry name" value="GLUTR"/>
    <property type="match status" value="1"/>
</dbReference>
<sequence length="468" mass="49361">MSVLLFGVSHRSAPVVVLEQLSIDESDQVKIIDRVLASPLVTEAMVLSTCNRVEVYAVVDAFHGGLSVIGQVLAEHSGMSMGELTKYAYVRYSEAAVEHLFAVASGLDSAVIGEQQVLGQVRRAYAVAESNRTVGRVLHELAQRALSVGKRVHSETAIDAAGASVVSVALGMAERKLGSLAGTTAVVIGAGAMGALSAVHLTRAGVGHIQVLNRSLSRAQRLARRIRESGVPAEALALDRLANVLADADVVVSCTGAVRPVVSLADVHHALAAARRDEATRPLVICDLGMPRDVDPAVARLPCVWVVDVDSVQHEPSAHAAAADVEAARHIVAAEVASYLVGQRMAEVTPTVTALRQRAAEVVEAELLRLDNRLPGLQSVQREEVARTVRRVVDKLLHAPTVRIKQLASAPGGDSYAEALRELFELDQTAVDAVATAGELPVVPSGFDAESRRGGGDMQSSPKRSPSN</sequence>
<gene>
    <name evidence="1" type="primary">hemA</name>
    <name type="ordered locus">MRA_0516</name>
</gene>
<proteinExistence type="inferred from homology"/>
<name>HEM1_MYCTA</name>
<evidence type="ECO:0000255" key="1">
    <source>
        <dbReference type="HAMAP-Rule" id="MF_00087"/>
    </source>
</evidence>
<evidence type="ECO:0000256" key="2">
    <source>
        <dbReference type="SAM" id="MobiDB-lite"/>
    </source>
</evidence>
<organism>
    <name type="scientific">Mycobacterium tuberculosis (strain ATCC 25177 / H37Ra)</name>
    <dbReference type="NCBI Taxonomy" id="419947"/>
    <lineage>
        <taxon>Bacteria</taxon>
        <taxon>Bacillati</taxon>
        <taxon>Actinomycetota</taxon>
        <taxon>Actinomycetes</taxon>
        <taxon>Mycobacteriales</taxon>
        <taxon>Mycobacteriaceae</taxon>
        <taxon>Mycobacterium</taxon>
        <taxon>Mycobacterium tuberculosis complex</taxon>
    </lineage>
</organism>
<accession>A5TZN9</accession>
<feature type="chain" id="PRO_1000004651" description="Glutamyl-tRNA reductase">
    <location>
        <begin position="1"/>
        <end position="468"/>
    </location>
</feature>
<feature type="region of interest" description="Disordered" evidence="2">
    <location>
        <begin position="443"/>
        <end position="468"/>
    </location>
</feature>
<feature type="compositionally biased region" description="Polar residues" evidence="2">
    <location>
        <begin position="458"/>
        <end position="468"/>
    </location>
</feature>
<feature type="active site" description="Nucleophile" evidence="1">
    <location>
        <position position="50"/>
    </location>
</feature>
<feature type="binding site" evidence="1">
    <location>
        <begin position="49"/>
        <end position="52"/>
    </location>
    <ligand>
        <name>substrate</name>
    </ligand>
</feature>
<feature type="binding site" evidence="1">
    <location>
        <position position="109"/>
    </location>
    <ligand>
        <name>substrate</name>
    </ligand>
</feature>
<feature type="binding site" evidence="1">
    <location>
        <begin position="114"/>
        <end position="116"/>
    </location>
    <ligand>
        <name>substrate</name>
    </ligand>
</feature>
<feature type="binding site" evidence="1">
    <location>
        <position position="120"/>
    </location>
    <ligand>
        <name>substrate</name>
    </ligand>
</feature>
<feature type="binding site" evidence="1">
    <location>
        <begin position="189"/>
        <end position="194"/>
    </location>
    <ligand>
        <name>NADP(+)</name>
        <dbReference type="ChEBI" id="CHEBI:58349"/>
    </ligand>
</feature>
<feature type="site" description="Important for activity" evidence="1">
    <location>
        <position position="99"/>
    </location>
</feature>